<keyword id="KW-1184">Jasmonic acid signaling pathway</keyword>
<keyword id="KW-0539">Nucleus</keyword>
<keyword id="KW-1185">Reference proteome</keyword>
<keyword id="KW-0804">Transcription</keyword>
<keyword id="KW-0805">Transcription regulation</keyword>
<keyword id="KW-0832">Ubl conjugation</keyword>
<evidence type="ECO:0000250" key="1">
    <source>
        <dbReference type="UniProtKB" id="Q7XPM8"/>
    </source>
</evidence>
<evidence type="ECO:0000255" key="2"/>
<evidence type="ECO:0000255" key="3">
    <source>
        <dbReference type="PROSITE-ProRule" id="PRU00650"/>
    </source>
</evidence>
<evidence type="ECO:0000255" key="4">
    <source>
        <dbReference type="PROSITE-ProRule" id="PRU00768"/>
    </source>
</evidence>
<evidence type="ECO:0000256" key="5">
    <source>
        <dbReference type="SAM" id="MobiDB-lite"/>
    </source>
</evidence>
<evidence type="ECO:0000269" key="6">
    <source>
    </source>
</evidence>
<evidence type="ECO:0000269" key="7">
    <source>
    </source>
</evidence>
<evidence type="ECO:0000303" key="8">
    <source>
    </source>
</evidence>
<evidence type="ECO:0000303" key="9">
    <source>
    </source>
</evidence>
<evidence type="ECO:0000305" key="10"/>
<evidence type="ECO:0000312" key="11">
    <source>
        <dbReference type="EMBL" id="AAP03360.1"/>
    </source>
</evidence>
<evidence type="ECO:0000312" key="12">
    <source>
        <dbReference type="EMBL" id="ABF96480.1"/>
    </source>
</evidence>
<evidence type="ECO:0000312" key="13">
    <source>
        <dbReference type="EMBL" id="BAF12236.1"/>
    </source>
</evidence>
<evidence type="ECO:0000312" key="14">
    <source>
        <dbReference type="EMBL" id="EAZ27256.1"/>
    </source>
</evidence>
<protein>
    <recommendedName>
        <fullName evidence="10">Protein TIFY 10a</fullName>
        <shortName evidence="8">OsTIFY10a</shortName>
    </recommendedName>
    <alternativeName>
        <fullName evidence="10">Jasmonate ZIM domain-containing protein 6</fullName>
        <shortName evidence="8">OsJAZ6</shortName>
    </alternativeName>
    <alternativeName>
        <fullName evidence="9">OsJAZ5</fullName>
    </alternativeName>
</protein>
<comment type="function">
    <text evidence="1">Repressor of jasmonate responses.</text>
</comment>
<comment type="subunit">
    <text evidence="7">Interacts with COI1A and COI1B in a coronatine-dependent manner. Coronatine is an analog of jasmonoyl isoleucine (JA-Ile).</text>
</comment>
<comment type="subcellular location">
    <subcellularLocation>
        <location evidence="4">Nucleus</location>
    </subcellularLocation>
</comment>
<comment type="induction">
    <text evidence="6">By jasmonate, wounding, and cold, drought and salt stresses. Down-regulated by abscisic acid (ABA).</text>
</comment>
<comment type="domain">
    <text evidence="1">The jas domain (164-189) is required for interaction with COI1.</text>
</comment>
<comment type="PTM">
    <text evidence="1">Ubiquitinated. Targeted for degradation by the SCF(COI1) E3 ubiquitin ligase-proteasome pathway during jasmonate signaling.</text>
</comment>
<comment type="similarity">
    <text evidence="10">Belongs to the TIFY/JAZ family.</text>
</comment>
<reference key="1">
    <citation type="journal article" date="2005" name="Genome Res.">
        <title>Sequence, annotation, and analysis of synteny between rice chromosome 3 and diverged grass species.</title>
        <authorList>
            <consortium name="The rice chromosome 3 sequencing consortium"/>
            <person name="Buell C.R."/>
            <person name="Yuan Q."/>
            <person name="Ouyang S."/>
            <person name="Liu J."/>
            <person name="Zhu W."/>
            <person name="Wang A."/>
            <person name="Maiti R."/>
            <person name="Haas B."/>
            <person name="Wortman J."/>
            <person name="Pertea M."/>
            <person name="Jones K.M."/>
            <person name="Kim M."/>
            <person name="Overton L."/>
            <person name="Tsitrin T."/>
            <person name="Fadrosh D."/>
            <person name="Bera J."/>
            <person name="Weaver B."/>
            <person name="Jin S."/>
            <person name="Johri S."/>
            <person name="Reardon M."/>
            <person name="Webb K."/>
            <person name="Hill J."/>
            <person name="Moffat K."/>
            <person name="Tallon L."/>
            <person name="Van Aken S."/>
            <person name="Lewis M."/>
            <person name="Utterback T."/>
            <person name="Feldblyum T."/>
            <person name="Zismann V."/>
            <person name="Iobst S."/>
            <person name="Hsiao J."/>
            <person name="de Vazeille A.R."/>
            <person name="Salzberg S.L."/>
            <person name="White O."/>
            <person name="Fraser C.M."/>
            <person name="Yu Y."/>
            <person name="Kim H."/>
            <person name="Rambo T."/>
            <person name="Currie J."/>
            <person name="Collura K."/>
            <person name="Kernodle-Thompson S."/>
            <person name="Wei F."/>
            <person name="Kudrna K."/>
            <person name="Ammiraju J.S.S."/>
            <person name="Luo M."/>
            <person name="Goicoechea J.L."/>
            <person name="Wing R.A."/>
            <person name="Henry D."/>
            <person name="Oates R."/>
            <person name="Palmer M."/>
            <person name="Pries G."/>
            <person name="Saski C."/>
            <person name="Simmons J."/>
            <person name="Soderlund C."/>
            <person name="Nelson W."/>
            <person name="de la Bastide M."/>
            <person name="Spiegel L."/>
            <person name="Nascimento L."/>
            <person name="Huang E."/>
            <person name="Preston R."/>
            <person name="Zutavern T."/>
            <person name="Palmer L."/>
            <person name="O'Shaughnessy A."/>
            <person name="Dike S."/>
            <person name="McCombie W.R."/>
            <person name="Minx P."/>
            <person name="Cordum H."/>
            <person name="Wilson R."/>
            <person name="Jin W."/>
            <person name="Lee H.R."/>
            <person name="Jiang J."/>
            <person name="Jackson S."/>
        </authorList>
    </citation>
    <scope>NUCLEOTIDE SEQUENCE [LARGE SCALE GENOMIC DNA]</scope>
    <source>
        <strain>cv. Nipponbare</strain>
    </source>
</reference>
<reference key="2">
    <citation type="journal article" date="2005" name="Nature">
        <title>The map-based sequence of the rice genome.</title>
        <authorList>
            <consortium name="International rice genome sequencing project (IRGSP)"/>
        </authorList>
    </citation>
    <scope>NUCLEOTIDE SEQUENCE [LARGE SCALE GENOMIC DNA]</scope>
    <source>
        <strain>cv. Nipponbare</strain>
    </source>
</reference>
<reference key="3">
    <citation type="journal article" date="2008" name="Nucleic Acids Res.">
        <title>The rice annotation project database (RAP-DB): 2008 update.</title>
        <authorList>
            <consortium name="The rice annotation project (RAP)"/>
        </authorList>
    </citation>
    <scope>GENOME REANNOTATION</scope>
    <source>
        <strain>cv. Nipponbare</strain>
    </source>
</reference>
<reference key="4">
    <citation type="journal article" date="2013" name="Rice">
        <title>Improvement of the Oryza sativa Nipponbare reference genome using next generation sequence and optical map data.</title>
        <authorList>
            <person name="Kawahara Y."/>
            <person name="de la Bastide M."/>
            <person name="Hamilton J.P."/>
            <person name="Kanamori H."/>
            <person name="McCombie W.R."/>
            <person name="Ouyang S."/>
            <person name="Schwartz D.C."/>
            <person name="Tanaka T."/>
            <person name="Wu J."/>
            <person name="Zhou S."/>
            <person name="Childs K.L."/>
            <person name="Davidson R.M."/>
            <person name="Lin H."/>
            <person name="Quesada-Ocampo L."/>
            <person name="Vaillancourt B."/>
            <person name="Sakai H."/>
            <person name="Lee S.S."/>
            <person name="Kim J."/>
            <person name="Numa H."/>
            <person name="Itoh T."/>
            <person name="Buell C.R."/>
            <person name="Matsumoto T."/>
        </authorList>
    </citation>
    <scope>GENOME REANNOTATION</scope>
    <source>
        <strain>cv. Nipponbare</strain>
    </source>
</reference>
<reference key="5">
    <citation type="journal article" date="2005" name="PLoS Biol.">
        <title>The genomes of Oryza sativa: a history of duplications.</title>
        <authorList>
            <person name="Yu J."/>
            <person name="Wang J."/>
            <person name="Lin W."/>
            <person name="Li S."/>
            <person name="Li H."/>
            <person name="Zhou J."/>
            <person name="Ni P."/>
            <person name="Dong W."/>
            <person name="Hu S."/>
            <person name="Zeng C."/>
            <person name="Zhang J."/>
            <person name="Zhang Y."/>
            <person name="Li R."/>
            <person name="Xu Z."/>
            <person name="Li S."/>
            <person name="Li X."/>
            <person name="Zheng H."/>
            <person name="Cong L."/>
            <person name="Lin L."/>
            <person name="Yin J."/>
            <person name="Geng J."/>
            <person name="Li G."/>
            <person name="Shi J."/>
            <person name="Liu J."/>
            <person name="Lv H."/>
            <person name="Li J."/>
            <person name="Wang J."/>
            <person name="Deng Y."/>
            <person name="Ran L."/>
            <person name="Shi X."/>
            <person name="Wang X."/>
            <person name="Wu Q."/>
            <person name="Li C."/>
            <person name="Ren X."/>
            <person name="Wang J."/>
            <person name="Wang X."/>
            <person name="Li D."/>
            <person name="Liu D."/>
            <person name="Zhang X."/>
            <person name="Ji Z."/>
            <person name="Zhao W."/>
            <person name="Sun Y."/>
            <person name="Zhang Z."/>
            <person name="Bao J."/>
            <person name="Han Y."/>
            <person name="Dong L."/>
            <person name="Ji J."/>
            <person name="Chen P."/>
            <person name="Wu S."/>
            <person name="Liu J."/>
            <person name="Xiao Y."/>
            <person name="Bu D."/>
            <person name="Tan J."/>
            <person name="Yang L."/>
            <person name="Ye C."/>
            <person name="Zhang J."/>
            <person name="Xu J."/>
            <person name="Zhou Y."/>
            <person name="Yu Y."/>
            <person name="Zhang B."/>
            <person name="Zhuang S."/>
            <person name="Wei H."/>
            <person name="Liu B."/>
            <person name="Lei M."/>
            <person name="Yu H."/>
            <person name="Li Y."/>
            <person name="Xu H."/>
            <person name="Wei S."/>
            <person name="He X."/>
            <person name="Fang L."/>
            <person name="Zhang Z."/>
            <person name="Zhang Y."/>
            <person name="Huang X."/>
            <person name="Su Z."/>
            <person name="Tong W."/>
            <person name="Li J."/>
            <person name="Tong Z."/>
            <person name="Li S."/>
            <person name="Ye J."/>
            <person name="Wang L."/>
            <person name="Fang L."/>
            <person name="Lei T."/>
            <person name="Chen C.-S."/>
            <person name="Chen H.-C."/>
            <person name="Xu Z."/>
            <person name="Li H."/>
            <person name="Huang H."/>
            <person name="Zhang F."/>
            <person name="Xu H."/>
            <person name="Li N."/>
            <person name="Zhao C."/>
            <person name="Li S."/>
            <person name="Dong L."/>
            <person name="Huang Y."/>
            <person name="Li L."/>
            <person name="Xi Y."/>
            <person name="Qi Q."/>
            <person name="Li W."/>
            <person name="Zhang B."/>
            <person name="Hu W."/>
            <person name="Zhang Y."/>
            <person name="Tian X."/>
            <person name="Jiao Y."/>
            <person name="Liang X."/>
            <person name="Jin J."/>
            <person name="Gao L."/>
            <person name="Zheng W."/>
            <person name="Hao B."/>
            <person name="Liu S.-M."/>
            <person name="Wang W."/>
            <person name="Yuan L."/>
            <person name="Cao M."/>
            <person name="McDermott J."/>
            <person name="Samudrala R."/>
            <person name="Wang J."/>
            <person name="Wong G.K.-S."/>
            <person name="Yang H."/>
        </authorList>
    </citation>
    <scope>NUCLEOTIDE SEQUENCE [LARGE SCALE GENOMIC DNA]</scope>
    <source>
        <strain>cv. Nipponbare</strain>
    </source>
</reference>
<reference key="6">
    <citation type="journal article" date="2003" name="Science">
        <title>Collection, mapping, and annotation of over 28,000 cDNA clones from japonica rice.</title>
        <authorList>
            <consortium name="The rice full-length cDNA consortium"/>
        </authorList>
    </citation>
    <scope>NUCLEOTIDE SEQUENCE [LARGE SCALE MRNA]</scope>
    <source>
        <strain>cv. Nipponbare</strain>
    </source>
</reference>
<reference key="7">
    <citation type="journal article" date="2009" name="Plant Mol. Biol.">
        <title>Identification and expression profiling analysis of TIFY family genes involved in stress and phytohormone responses in rice.</title>
        <authorList>
            <person name="Ye H."/>
            <person name="Du H."/>
            <person name="Tang N."/>
            <person name="Li X."/>
            <person name="Xiong L."/>
        </authorList>
    </citation>
    <scope>GENE FAMILY</scope>
    <scope>NOMENCLATURE</scope>
    <scope>INDUCTION</scope>
</reference>
<reference key="8">
    <citation type="journal article" date="2013" name="PLoS ONE">
        <title>Oryza sativa COI homologues restore jasmonate signal transduction in Arabidopsis coi1-1 mutants.</title>
        <authorList>
            <person name="Lee H.Y."/>
            <person name="Seo J.S."/>
            <person name="Cho J.H."/>
            <person name="Jung H."/>
            <person name="Kim J.K."/>
            <person name="Lee J.S."/>
            <person name="Rhee S."/>
            <person name="Do Choi Y."/>
        </authorList>
    </citation>
    <scope>INTERACTION WITH COI1A AND COI1B</scope>
</reference>
<dbReference type="EMBL" id="AC118134">
    <property type="protein sequence ID" value="AAP03360.1"/>
    <property type="molecule type" value="Genomic_DNA"/>
</dbReference>
<dbReference type="EMBL" id="DP000009">
    <property type="protein sequence ID" value="ABF96480.1"/>
    <property type="molecule type" value="Genomic_DNA"/>
</dbReference>
<dbReference type="EMBL" id="AP008209">
    <property type="protein sequence ID" value="BAF12236.1"/>
    <property type="molecule type" value="Genomic_DNA"/>
</dbReference>
<dbReference type="EMBL" id="AP014959">
    <property type="protein sequence ID" value="BAS84615.1"/>
    <property type="molecule type" value="Genomic_DNA"/>
</dbReference>
<dbReference type="EMBL" id="CM000140">
    <property type="protein sequence ID" value="EAZ27256.1"/>
    <property type="molecule type" value="Genomic_DNA"/>
</dbReference>
<dbReference type="EMBL" id="AK061842">
    <property type="protein sequence ID" value="BAG88142.1"/>
    <property type="molecule type" value="mRNA"/>
</dbReference>
<dbReference type="EMBL" id="AK099557">
    <property type="protein sequence ID" value="BAG94191.1"/>
    <property type="molecule type" value="mRNA"/>
</dbReference>
<dbReference type="RefSeq" id="XP_015630632.1">
    <property type="nucleotide sequence ID" value="XM_015775146.1"/>
</dbReference>
<dbReference type="SMR" id="Q84R94"/>
<dbReference type="FunCoup" id="Q84R94">
    <property type="interactions" value="973"/>
</dbReference>
<dbReference type="STRING" id="39947.Q84R94"/>
<dbReference type="PaxDb" id="39947-Q84R94"/>
<dbReference type="EnsemblPlants" id="Os03t0402800-01">
    <property type="protein sequence ID" value="Os03t0402800-01"/>
    <property type="gene ID" value="Os03g0402800"/>
</dbReference>
<dbReference type="Gramene" id="Os03t0402800-01">
    <property type="protein sequence ID" value="Os03t0402800-01"/>
    <property type="gene ID" value="Os03g0402800"/>
</dbReference>
<dbReference type="KEGG" id="dosa:Os03g0402800"/>
<dbReference type="eggNOG" id="ENOG502S303">
    <property type="taxonomic scope" value="Eukaryota"/>
</dbReference>
<dbReference type="HOGENOM" id="CLU_051749_1_1_1"/>
<dbReference type="InParanoid" id="Q84R94"/>
<dbReference type="OMA" id="MSCAVEP"/>
<dbReference type="OrthoDB" id="1937734at2759"/>
<dbReference type="PlantReactome" id="R-OSA-5679411">
    <property type="pathway name" value="Gibberellin signaling"/>
</dbReference>
<dbReference type="PlantReactome" id="R-OSA-6787011">
    <property type="pathway name" value="Jasmonic acid signaling"/>
</dbReference>
<dbReference type="Proteomes" id="UP000000763">
    <property type="component" value="Chromosome 3"/>
</dbReference>
<dbReference type="Proteomes" id="UP000007752">
    <property type="component" value="Chromosome 3"/>
</dbReference>
<dbReference type="Proteomes" id="UP000059680">
    <property type="component" value="Chromosome 3"/>
</dbReference>
<dbReference type="ExpressionAtlas" id="Q84R94">
    <property type="expression patterns" value="baseline and differential"/>
</dbReference>
<dbReference type="GO" id="GO:0005634">
    <property type="term" value="C:nucleus"/>
    <property type="evidence" value="ECO:0000318"/>
    <property type="project" value="GO_Central"/>
</dbReference>
<dbReference type="GO" id="GO:0031347">
    <property type="term" value="P:regulation of defense response"/>
    <property type="evidence" value="ECO:0000318"/>
    <property type="project" value="GO_Central"/>
</dbReference>
<dbReference type="GO" id="GO:2000022">
    <property type="term" value="P:regulation of jasmonic acid mediated signaling pathway"/>
    <property type="evidence" value="ECO:0000318"/>
    <property type="project" value="GO_Central"/>
</dbReference>
<dbReference type="GO" id="GO:0009611">
    <property type="term" value="P:response to wounding"/>
    <property type="evidence" value="ECO:0000318"/>
    <property type="project" value="GO_Central"/>
</dbReference>
<dbReference type="InterPro" id="IPR018467">
    <property type="entry name" value="CCT_CS"/>
</dbReference>
<dbReference type="InterPro" id="IPR040390">
    <property type="entry name" value="TIFY/JAZ"/>
</dbReference>
<dbReference type="InterPro" id="IPR010399">
    <property type="entry name" value="Tify_dom"/>
</dbReference>
<dbReference type="PANTHER" id="PTHR33077:SF135">
    <property type="entry name" value="PROTEIN TIFY 10A"/>
    <property type="match status" value="1"/>
</dbReference>
<dbReference type="PANTHER" id="PTHR33077">
    <property type="entry name" value="PROTEIN TIFY 4A-RELATED-RELATED"/>
    <property type="match status" value="1"/>
</dbReference>
<dbReference type="Pfam" id="PF09425">
    <property type="entry name" value="Jas_motif"/>
    <property type="match status" value="1"/>
</dbReference>
<dbReference type="Pfam" id="PF06200">
    <property type="entry name" value="tify"/>
    <property type="match status" value="1"/>
</dbReference>
<dbReference type="SMART" id="SM00979">
    <property type="entry name" value="TIFY"/>
    <property type="match status" value="1"/>
</dbReference>
<dbReference type="PROSITE" id="PS51320">
    <property type="entry name" value="TIFY"/>
    <property type="match status" value="1"/>
</dbReference>
<accession>Q84R94</accession>
<accession>A0A0P0VZ82</accession>
<feature type="chain" id="PRO_0000434848" description="Protein TIFY 10a">
    <location>
        <begin position="1"/>
        <end position="228"/>
    </location>
</feature>
<feature type="domain" description="Tify" evidence="3">
    <location>
        <begin position="75"/>
        <end position="110"/>
    </location>
</feature>
<feature type="region of interest" description="Disordered" evidence="5">
    <location>
        <begin position="175"/>
        <end position="228"/>
    </location>
</feature>
<feature type="short sequence motif" description="Jas" evidence="2">
    <location>
        <begin position="164"/>
        <end position="189"/>
    </location>
</feature>
<feature type="short sequence motif" description="Nuclear localization signal" evidence="4">
    <location>
        <begin position="166"/>
        <end position="173"/>
    </location>
</feature>
<proteinExistence type="evidence at protein level"/>
<organism>
    <name type="scientific">Oryza sativa subsp. japonica</name>
    <name type="common">Rice</name>
    <dbReference type="NCBI Taxonomy" id="39947"/>
    <lineage>
        <taxon>Eukaryota</taxon>
        <taxon>Viridiplantae</taxon>
        <taxon>Streptophyta</taxon>
        <taxon>Embryophyta</taxon>
        <taxon>Tracheophyta</taxon>
        <taxon>Spermatophyta</taxon>
        <taxon>Magnoliopsida</taxon>
        <taxon>Liliopsida</taxon>
        <taxon>Poales</taxon>
        <taxon>Poaceae</taxon>
        <taxon>BOP clade</taxon>
        <taxon>Oryzoideae</taxon>
        <taxon>Oryzeae</taxon>
        <taxon>Oryzinae</taxon>
        <taxon>Oryza</taxon>
        <taxon>Oryza sativa</taxon>
    </lineage>
</organism>
<sequence>MASAKSGERGSSSFAMACSLLSRYVRQNGAAAGELGLGIRGEADANKGKETMELFPQNSGFGSEAAAVKETPDAREQEKRQLTIFYGGKVLVFDDFPAEKAKDLMQMASKSSSTAQNCVLLPSSATATVADNTKVSAVPAPASALPVAQANAPKPVRPNAADLPQARKASLHRFLEKRKDRLQAKAPYQGSPSDASPVKKELQESQPWLGLGPQVAAPDLSLRQESSQ</sequence>
<gene>
    <name evidence="8" type="primary">TIFY10A</name>
    <name evidence="8" type="synonym">JAZ6</name>
    <name evidence="13" type="ordered locus">Os03g0402800</name>
    <name evidence="12" type="ordered locus">LOC_Os03g28940</name>
    <name evidence="14" type="ORF">OsJ_11194</name>
    <name evidence="11" type="ORF">OSJNBb0041J20.5</name>
</gene>
<name>TI10A_ORYSJ</name>